<dbReference type="EC" id="1.18.1.-" evidence="2"/>
<dbReference type="EMBL" id="BT025363">
    <property type="protein sequence ID" value="ABF57319.1"/>
    <property type="molecule type" value="mRNA"/>
</dbReference>
<dbReference type="EMBL" id="DAAA02032411">
    <property type="status" value="NOT_ANNOTATED_CDS"/>
    <property type="molecule type" value="Genomic_DNA"/>
</dbReference>
<dbReference type="RefSeq" id="NP_001039623.2">
    <property type="nucleotide sequence ID" value="NM_001046158.2"/>
</dbReference>
<dbReference type="SMR" id="Q1JPJ0"/>
<dbReference type="FunCoup" id="Q1JPJ0">
    <property type="interactions" value="3090"/>
</dbReference>
<dbReference type="PaxDb" id="9913-ENSBTAP00000054403"/>
<dbReference type="GeneID" id="513873"/>
<dbReference type="KEGG" id="bta:513873"/>
<dbReference type="CTD" id="27158"/>
<dbReference type="VEuPathDB" id="HostDB:ENSBTAG00000047061"/>
<dbReference type="eggNOG" id="KOG1159">
    <property type="taxonomic scope" value="Eukaryota"/>
</dbReference>
<dbReference type="HOGENOM" id="CLU_001570_17_6_1"/>
<dbReference type="InParanoid" id="Q1JPJ0"/>
<dbReference type="OMA" id="DIMSIPR"/>
<dbReference type="OrthoDB" id="1856718at2759"/>
<dbReference type="TreeFam" id="TF105716"/>
<dbReference type="Proteomes" id="UP000009136">
    <property type="component" value="Chromosome 11"/>
</dbReference>
<dbReference type="Bgee" id="ENSBTAG00000047061">
    <property type="expression patterns" value="Expressed in laryngeal cartilage and 105 other cell types or tissues"/>
</dbReference>
<dbReference type="GO" id="GO:0005829">
    <property type="term" value="C:cytosol"/>
    <property type="evidence" value="ECO:0000250"/>
    <property type="project" value="UniProtKB"/>
</dbReference>
<dbReference type="GO" id="GO:0048471">
    <property type="term" value="C:perinuclear region of cytoplasm"/>
    <property type="evidence" value="ECO:0007669"/>
    <property type="project" value="UniProtKB-SubCell"/>
</dbReference>
<dbReference type="GO" id="GO:0009055">
    <property type="term" value="F:electron transfer activity"/>
    <property type="evidence" value="ECO:0000250"/>
    <property type="project" value="UniProtKB"/>
</dbReference>
<dbReference type="GO" id="GO:0050660">
    <property type="term" value="F:flavin adenine dinucleotide binding"/>
    <property type="evidence" value="ECO:0000318"/>
    <property type="project" value="GO_Central"/>
</dbReference>
<dbReference type="GO" id="GO:0010181">
    <property type="term" value="F:FMN binding"/>
    <property type="evidence" value="ECO:0000318"/>
    <property type="project" value="GO_Central"/>
</dbReference>
<dbReference type="GO" id="GO:0050661">
    <property type="term" value="F:NADP binding"/>
    <property type="evidence" value="ECO:0007669"/>
    <property type="project" value="UniProtKB-UniRule"/>
</dbReference>
<dbReference type="GO" id="GO:0003958">
    <property type="term" value="F:NADPH-hemoprotein reductase activity"/>
    <property type="evidence" value="ECO:0007669"/>
    <property type="project" value="InterPro"/>
</dbReference>
<dbReference type="GO" id="GO:0160246">
    <property type="term" value="F:NADPH-iron-sulfur [2Fe-2S] protein oxidoreductase activity"/>
    <property type="evidence" value="ECO:0000250"/>
    <property type="project" value="UniProtKB"/>
</dbReference>
<dbReference type="GO" id="GO:0016491">
    <property type="term" value="F:oxidoreductase activity"/>
    <property type="evidence" value="ECO:0000318"/>
    <property type="project" value="GO_Central"/>
</dbReference>
<dbReference type="GO" id="GO:0016653">
    <property type="term" value="F:oxidoreductase activity, acting on NAD(P)H, heme protein as acceptor"/>
    <property type="evidence" value="ECO:0000250"/>
    <property type="project" value="UniProtKB"/>
</dbReference>
<dbReference type="GO" id="GO:0016226">
    <property type="term" value="P:iron-sulfur cluster assembly"/>
    <property type="evidence" value="ECO:0007669"/>
    <property type="project" value="UniProtKB-UniRule"/>
</dbReference>
<dbReference type="FunFam" id="3.40.50.80:FF:000001">
    <property type="entry name" value="NADPH--cytochrome P450 reductase 1"/>
    <property type="match status" value="1"/>
</dbReference>
<dbReference type="FunFam" id="1.20.990.10:FF:000008">
    <property type="entry name" value="NADPH-dependent diflavin oxidoreductase 1"/>
    <property type="match status" value="1"/>
</dbReference>
<dbReference type="FunFam" id="3.40.50.360:FF:000015">
    <property type="entry name" value="NADPH-dependent diflavin oxidoreductase 1"/>
    <property type="match status" value="1"/>
</dbReference>
<dbReference type="Gene3D" id="3.40.50.360">
    <property type="match status" value="1"/>
</dbReference>
<dbReference type="Gene3D" id="1.20.990.10">
    <property type="entry name" value="NADPH-cytochrome p450 Reductase, Chain A, domain 3"/>
    <property type="match status" value="1"/>
</dbReference>
<dbReference type="Gene3D" id="3.40.50.80">
    <property type="entry name" value="Nucleotide-binding domain of ferredoxin-NADP reductase (FNR) module"/>
    <property type="match status" value="1"/>
</dbReference>
<dbReference type="Gene3D" id="2.40.30.10">
    <property type="entry name" value="Translation factors"/>
    <property type="match status" value="1"/>
</dbReference>
<dbReference type="HAMAP" id="MF_03178">
    <property type="entry name" value="NDOR1"/>
    <property type="match status" value="1"/>
</dbReference>
<dbReference type="InterPro" id="IPR003097">
    <property type="entry name" value="CysJ-like_FAD-binding"/>
</dbReference>
<dbReference type="InterPro" id="IPR017927">
    <property type="entry name" value="FAD-bd_FR_type"/>
</dbReference>
<dbReference type="InterPro" id="IPR001094">
    <property type="entry name" value="Flavdoxin-like"/>
</dbReference>
<dbReference type="InterPro" id="IPR008254">
    <property type="entry name" value="Flavodoxin/NO_synth"/>
</dbReference>
<dbReference type="InterPro" id="IPR001709">
    <property type="entry name" value="Flavoprot_Pyr_Nucl_cyt_Rdtase"/>
</dbReference>
<dbReference type="InterPro" id="IPR029039">
    <property type="entry name" value="Flavoprotein-like_sf"/>
</dbReference>
<dbReference type="InterPro" id="IPR039261">
    <property type="entry name" value="FNR_nucleotide-bd"/>
</dbReference>
<dbReference type="InterPro" id="IPR023173">
    <property type="entry name" value="NADPH_Cyt_P450_Rdtase_alpha"/>
</dbReference>
<dbReference type="InterPro" id="IPR028879">
    <property type="entry name" value="NDOR1"/>
</dbReference>
<dbReference type="InterPro" id="IPR001433">
    <property type="entry name" value="OxRdtase_FAD/NAD-bd"/>
</dbReference>
<dbReference type="InterPro" id="IPR017938">
    <property type="entry name" value="Riboflavin_synthase-like_b-brl"/>
</dbReference>
<dbReference type="PANTHER" id="PTHR19384:SF10">
    <property type="entry name" value="NADPH-DEPENDENT DIFLAVIN OXIDOREDUCTASE 1"/>
    <property type="match status" value="1"/>
</dbReference>
<dbReference type="PANTHER" id="PTHR19384">
    <property type="entry name" value="NITRIC OXIDE SYNTHASE-RELATED"/>
    <property type="match status" value="1"/>
</dbReference>
<dbReference type="Pfam" id="PF00667">
    <property type="entry name" value="FAD_binding_1"/>
    <property type="match status" value="1"/>
</dbReference>
<dbReference type="Pfam" id="PF00258">
    <property type="entry name" value="Flavodoxin_1"/>
    <property type="match status" value="1"/>
</dbReference>
<dbReference type="Pfam" id="PF00175">
    <property type="entry name" value="NAD_binding_1"/>
    <property type="match status" value="1"/>
</dbReference>
<dbReference type="PRINTS" id="PR00369">
    <property type="entry name" value="FLAVODOXIN"/>
</dbReference>
<dbReference type="PRINTS" id="PR00371">
    <property type="entry name" value="FPNCR"/>
</dbReference>
<dbReference type="SUPFAM" id="SSF52343">
    <property type="entry name" value="Ferredoxin reductase-like, C-terminal NADP-linked domain"/>
    <property type="match status" value="1"/>
</dbReference>
<dbReference type="SUPFAM" id="SSF52218">
    <property type="entry name" value="Flavoproteins"/>
    <property type="match status" value="1"/>
</dbReference>
<dbReference type="SUPFAM" id="SSF63380">
    <property type="entry name" value="Riboflavin synthase domain-like"/>
    <property type="match status" value="1"/>
</dbReference>
<dbReference type="PROSITE" id="PS51384">
    <property type="entry name" value="FAD_FR"/>
    <property type="match status" value="1"/>
</dbReference>
<dbReference type="PROSITE" id="PS50902">
    <property type="entry name" value="FLAVODOXIN_LIKE"/>
    <property type="match status" value="1"/>
</dbReference>
<protein>
    <recommendedName>
        <fullName evidence="2">NADPH-dependent diflavin oxidoreductase 1</fullName>
        <ecNumber evidence="2">1.18.1.-</ecNumber>
    </recommendedName>
    <alternativeName>
        <fullName evidence="2">NADPH-dependent FMN and FAD-containing oxidoreductase</fullName>
    </alternativeName>
</protein>
<name>NDOR1_BOVIN</name>
<gene>
    <name evidence="2" type="primary">NDOR1</name>
</gene>
<organism>
    <name type="scientific">Bos taurus</name>
    <name type="common">Bovine</name>
    <dbReference type="NCBI Taxonomy" id="9913"/>
    <lineage>
        <taxon>Eukaryota</taxon>
        <taxon>Metazoa</taxon>
        <taxon>Chordata</taxon>
        <taxon>Craniata</taxon>
        <taxon>Vertebrata</taxon>
        <taxon>Euteleostomi</taxon>
        <taxon>Mammalia</taxon>
        <taxon>Eutheria</taxon>
        <taxon>Laurasiatheria</taxon>
        <taxon>Artiodactyla</taxon>
        <taxon>Ruminantia</taxon>
        <taxon>Pecora</taxon>
        <taxon>Bovidae</taxon>
        <taxon>Bovinae</taxon>
        <taxon>Bos</taxon>
    </lineage>
</organism>
<comment type="function">
    <text evidence="1 2">NADPH-dependent reductase which is a central component of the cytosolic iron-sulfur (Fe-S) protein assembly (CIA) machinery. Transfers electrons from NADPH via its FAD and FMN prosthetic groups to the [2Fe-2S] cluster of CIAPIN1, another key component of the CIA machinery. In turn, this reduced cluster provides electrons for assembly of cytosolic iron-sulfur cluster proteins. It can also reduce the [2Fe-2S] cluster of CISD1 and activate this protein implicated in Fe/S cluster repair (By similarity). In vitro can fully activate methionine synthase/MTR in the presence of soluble cytochrome b5/CYB5A (By similarity).</text>
</comment>
<comment type="catalytic activity">
    <reaction evidence="2">
        <text>2 oxidized [2Fe-2S]-[protein] + NADPH = 2 reduced [2Fe-2S]-[protein] + NADP(+) + H(+)</text>
        <dbReference type="Rhea" id="RHEA:67716"/>
        <dbReference type="Rhea" id="RHEA-COMP:17327"/>
        <dbReference type="Rhea" id="RHEA-COMP:17328"/>
        <dbReference type="ChEBI" id="CHEBI:15378"/>
        <dbReference type="ChEBI" id="CHEBI:33737"/>
        <dbReference type="ChEBI" id="CHEBI:33738"/>
        <dbReference type="ChEBI" id="CHEBI:57783"/>
        <dbReference type="ChEBI" id="CHEBI:58349"/>
    </reaction>
    <physiologicalReaction direction="left-to-right" evidence="2">
        <dbReference type="Rhea" id="RHEA:67717"/>
    </physiologicalReaction>
</comment>
<comment type="cofactor">
    <cofactor evidence="2">
        <name>FAD</name>
        <dbReference type="ChEBI" id="CHEBI:57692"/>
    </cofactor>
</comment>
<comment type="cofactor">
    <cofactor evidence="2">
        <name>FMN</name>
        <dbReference type="ChEBI" id="CHEBI:58210"/>
    </cofactor>
</comment>
<comment type="subunit">
    <text evidence="1 2">Interacts with CIAPIN1; as part of the cytosolic iron-sulfur (Fe-S) protein assembly (CIA) machinery (By similarity). Interacts with DCPS (By similarity).</text>
</comment>
<comment type="subcellular location">
    <subcellularLocation>
        <location evidence="2">Cytoplasm</location>
        <location evidence="2">Perinuclear region</location>
    </subcellularLocation>
    <text evidence="2">Concentrated in perinuclear structure.</text>
</comment>
<comment type="similarity">
    <text evidence="2">Belongs to the NADPH-dependent diflavin oxidoreductase NDOR1 family.</text>
</comment>
<comment type="similarity">
    <text evidence="2">In the N-terminal section; belongs to the flavodoxin family.</text>
</comment>
<comment type="similarity">
    <text evidence="2">In the C-terminal section; belongs to the flavoprotein pyridine nucleotide cytochrome reductase family.</text>
</comment>
<evidence type="ECO:0000250" key="1">
    <source>
        <dbReference type="UniProtKB" id="Q9UHB4"/>
    </source>
</evidence>
<evidence type="ECO:0000255" key="2">
    <source>
        <dbReference type="HAMAP-Rule" id="MF_03178"/>
    </source>
</evidence>
<evidence type="ECO:0000305" key="3"/>
<accession>Q1JPJ0</accession>
<accession>G3MXY0</accession>
<proteinExistence type="evidence at transcript level"/>
<keyword id="KW-0963">Cytoplasm</keyword>
<keyword id="KW-0274">FAD</keyword>
<keyword id="KW-0285">Flavoprotein</keyword>
<keyword id="KW-0288">FMN</keyword>
<keyword id="KW-0521">NADP</keyword>
<keyword id="KW-0560">Oxidoreductase</keyword>
<keyword id="KW-1185">Reference proteome</keyword>
<feature type="chain" id="PRO_0000319538" description="NADPH-dependent diflavin oxidoreductase 1">
    <location>
        <begin position="1"/>
        <end position="597"/>
    </location>
</feature>
<feature type="domain" description="Flavodoxin-like" evidence="2">
    <location>
        <begin position="6"/>
        <end position="150"/>
    </location>
</feature>
<feature type="domain" description="FAD-binding FR-type" evidence="2">
    <location>
        <begin position="206"/>
        <end position="446"/>
    </location>
</feature>
<feature type="binding site" evidence="2">
    <location>
        <begin position="12"/>
        <end position="17"/>
    </location>
    <ligand>
        <name>FMN</name>
        <dbReference type="ChEBI" id="CHEBI:58210"/>
    </ligand>
</feature>
<feature type="binding site" evidence="2">
    <location>
        <begin position="59"/>
        <end position="62"/>
    </location>
    <ligand>
        <name>FMN</name>
        <dbReference type="ChEBI" id="CHEBI:58210"/>
    </ligand>
</feature>
<feature type="binding site" evidence="2">
    <location>
        <begin position="97"/>
        <end position="106"/>
    </location>
    <ligand>
        <name>FMN</name>
        <dbReference type="ChEBI" id="CHEBI:58210"/>
    </ligand>
</feature>
<feature type="binding site" evidence="2">
    <location>
        <position position="132"/>
    </location>
    <ligand>
        <name>FMN</name>
        <dbReference type="ChEBI" id="CHEBI:58210"/>
    </ligand>
</feature>
<feature type="binding site" evidence="2">
    <location>
        <position position="350"/>
    </location>
    <ligand>
        <name>FAD</name>
        <dbReference type="ChEBI" id="CHEBI:57692"/>
    </ligand>
</feature>
<feature type="binding site" evidence="2">
    <location>
        <begin position="382"/>
        <end position="385"/>
    </location>
    <ligand>
        <name>FAD</name>
        <dbReference type="ChEBI" id="CHEBI:57692"/>
    </ligand>
</feature>
<feature type="binding site" evidence="2">
    <location>
        <begin position="416"/>
        <end position="419"/>
    </location>
    <ligand>
        <name>FAD</name>
        <dbReference type="ChEBI" id="CHEBI:57692"/>
    </ligand>
</feature>
<feature type="binding site" evidence="2">
    <location>
        <position position="460"/>
    </location>
    <ligand>
        <name>NADP(+)</name>
        <dbReference type="ChEBI" id="CHEBI:58349"/>
    </ligand>
</feature>
<feature type="binding site" evidence="2">
    <location>
        <begin position="515"/>
        <end position="516"/>
    </location>
    <ligand>
        <name>NADP(+)</name>
        <dbReference type="ChEBI" id="CHEBI:58349"/>
    </ligand>
</feature>
<feature type="binding site" evidence="2">
    <location>
        <begin position="521"/>
        <end position="525"/>
    </location>
    <ligand>
        <name>NADP(+)</name>
        <dbReference type="ChEBI" id="CHEBI:58349"/>
    </ligand>
</feature>
<feature type="binding site" evidence="2">
    <location>
        <position position="558"/>
    </location>
    <ligand>
        <name>NADP(+)</name>
        <dbReference type="ChEBI" id="CHEBI:58349"/>
    </ligand>
</feature>
<feature type="binding site" evidence="2">
    <location>
        <position position="596"/>
    </location>
    <ligand>
        <name>FAD</name>
        <dbReference type="ChEBI" id="CHEBI:57692"/>
    </ligand>
</feature>
<feature type="sequence conflict" description="In Ref. 1; ABF57319." evidence="3" ref="1">
    <original>W</original>
    <variation>R</variation>
    <location>
        <position position="331"/>
    </location>
</feature>
<feature type="sequence conflict" description="In Ref. 1; ABF57319." evidence="3" ref="1">
    <original>Q</original>
    <variation>H</variation>
    <location>
        <position position="398"/>
    </location>
</feature>
<feature type="sequence conflict" description="In Ref. 1; ABF57319." evidence="3" ref="1">
    <original>R</original>
    <variation>G</variation>
    <location>
        <position position="542"/>
    </location>
</feature>
<sequence>MPSARLLVLFGSQTGTAQDVSERLGREARRRQLSCRVEELDSYPVVNLINEPLVIFVCATTGQGDPPDNMKSFWRFIFRRSLPSTALRQMDFAVLGLGDSSYAKFNFVAKKLHRRLLQLGGSALLPVCLGDDQHELGPDAAIDPWLQDLWEKVLGPHPVPLNLDLSPPGVLWPSKFTLQFLKDTPSSGPEELCAAGTDPQGPPSELQPFLAPMVSNQRVTGPSHFQDVRLIEFDISGSGISFAAGDLVLIQPENTASHVQQFCQALGLDPEQHFTLQPREPGVTCPTRLPQPCSVRRLVSQYLDIASVPRRSFFELLACLSPHELEREKLWEFGSARGQEELCEYCTRPRRTALEVLCDFPHTAAAVPPDYLLDLLPLIRPRAFSIASSLRAHPSRLQILVAVVQYQTRLREPRRGLCSSWLASLDPAQGPVRVPLWVRSGGLTFPKTPDVPVIMVGPGTGVAPFRAAIQERVAQGETGNVLFFGCRRRDQDFYWEAEWEQLQARGCLTLVTAFSREQEQKVYVQHRLRALGPLVWELLDGRGAHFYLAGNAKYMPADVCDTLLSIFREEGGLSDPDAAAYLAQLQRTLRFQTETWA</sequence>
<reference key="1">
    <citation type="journal article" date="2005" name="BMC Genomics">
        <title>Characterization of 954 bovine full-CDS cDNA sequences.</title>
        <authorList>
            <person name="Harhay G.P."/>
            <person name="Sonstegard T.S."/>
            <person name="Keele J.W."/>
            <person name="Heaton M.P."/>
            <person name="Clawson M.L."/>
            <person name="Snelling W.M."/>
            <person name="Wiedmann R.T."/>
            <person name="Van Tassell C.P."/>
            <person name="Smith T.P.L."/>
        </authorList>
    </citation>
    <scope>NUCLEOTIDE SEQUENCE [LARGE SCALE MRNA] OF 1-577</scope>
</reference>
<reference key="2">
    <citation type="journal article" date="2009" name="Genome Biol.">
        <title>A whole-genome assembly of the domestic cow, Bos taurus.</title>
        <authorList>
            <person name="Zimin A.V."/>
            <person name="Delcher A.L."/>
            <person name="Florea L."/>
            <person name="Kelley D.R."/>
            <person name="Schatz M.C."/>
            <person name="Puiu D."/>
            <person name="Hanrahan F."/>
            <person name="Pertea G."/>
            <person name="Van Tassell C.P."/>
            <person name="Sonstegard T.S."/>
            <person name="Marcais G."/>
            <person name="Roberts M."/>
            <person name="Subramanian P."/>
            <person name="Yorke J.A."/>
            <person name="Salzberg S.L."/>
        </authorList>
    </citation>
    <scope>NUCLEOTIDE SEQUENCE [LARGE SCALE GENOMIC DNA]</scope>
    <source>
        <strain>Hereford</strain>
    </source>
</reference>